<proteinExistence type="inferred from homology"/>
<reference key="1">
    <citation type="journal article" date="2006" name="Nat. Biotechnol.">
        <title>Genome sequence of the bioplastic-producing 'Knallgas' bacterium Ralstonia eutropha H16.</title>
        <authorList>
            <person name="Pohlmann A."/>
            <person name="Fricke W.F."/>
            <person name="Reinecke F."/>
            <person name="Kusian B."/>
            <person name="Liesegang H."/>
            <person name="Cramm R."/>
            <person name="Eitinger T."/>
            <person name="Ewering C."/>
            <person name="Poetter M."/>
            <person name="Schwartz E."/>
            <person name="Strittmatter A."/>
            <person name="Voss I."/>
            <person name="Gottschalk G."/>
            <person name="Steinbuechel A."/>
            <person name="Friedrich B."/>
            <person name="Bowien B."/>
        </authorList>
    </citation>
    <scope>NUCLEOTIDE SEQUENCE [LARGE SCALE GENOMIC DNA]</scope>
    <source>
        <strain>ATCC 17699 / DSM 428 / KCTC 22496 / NCIMB 10442 / H16 / Stanier 337</strain>
    </source>
</reference>
<organism>
    <name type="scientific">Cupriavidus necator (strain ATCC 17699 / DSM 428 / KCTC 22496 / NCIMB 10442 / H16 / Stanier 337)</name>
    <name type="common">Ralstonia eutropha</name>
    <dbReference type="NCBI Taxonomy" id="381666"/>
    <lineage>
        <taxon>Bacteria</taxon>
        <taxon>Pseudomonadati</taxon>
        <taxon>Pseudomonadota</taxon>
        <taxon>Betaproteobacteria</taxon>
        <taxon>Burkholderiales</taxon>
        <taxon>Burkholderiaceae</taxon>
        <taxon>Cupriavidus</taxon>
    </lineage>
</organism>
<dbReference type="EC" id="3.4.23.36" evidence="1"/>
<dbReference type="EMBL" id="AM260479">
    <property type="protein sequence ID" value="CAJ94122.1"/>
    <property type="molecule type" value="Genomic_DNA"/>
</dbReference>
<dbReference type="RefSeq" id="WP_010814992.1">
    <property type="nucleotide sequence ID" value="NZ_CP039287.1"/>
</dbReference>
<dbReference type="SMR" id="Q0K799"/>
<dbReference type="STRING" id="381666.H16_A3047"/>
<dbReference type="KEGG" id="reh:H16_A3047"/>
<dbReference type="eggNOG" id="COG0597">
    <property type="taxonomic scope" value="Bacteria"/>
</dbReference>
<dbReference type="HOGENOM" id="CLU_083252_4_0_4"/>
<dbReference type="OrthoDB" id="9810259at2"/>
<dbReference type="UniPathway" id="UPA00665"/>
<dbReference type="Proteomes" id="UP000008210">
    <property type="component" value="Chromosome 1"/>
</dbReference>
<dbReference type="GO" id="GO:0005886">
    <property type="term" value="C:plasma membrane"/>
    <property type="evidence" value="ECO:0007669"/>
    <property type="project" value="UniProtKB-SubCell"/>
</dbReference>
<dbReference type="GO" id="GO:0004190">
    <property type="term" value="F:aspartic-type endopeptidase activity"/>
    <property type="evidence" value="ECO:0007669"/>
    <property type="project" value="UniProtKB-UniRule"/>
</dbReference>
<dbReference type="GO" id="GO:0006508">
    <property type="term" value="P:proteolysis"/>
    <property type="evidence" value="ECO:0007669"/>
    <property type="project" value="UniProtKB-KW"/>
</dbReference>
<dbReference type="HAMAP" id="MF_00161">
    <property type="entry name" value="LspA"/>
    <property type="match status" value="1"/>
</dbReference>
<dbReference type="InterPro" id="IPR001872">
    <property type="entry name" value="Peptidase_A8"/>
</dbReference>
<dbReference type="NCBIfam" id="TIGR00077">
    <property type="entry name" value="lspA"/>
    <property type="match status" value="1"/>
</dbReference>
<dbReference type="PANTHER" id="PTHR33695">
    <property type="entry name" value="LIPOPROTEIN SIGNAL PEPTIDASE"/>
    <property type="match status" value="1"/>
</dbReference>
<dbReference type="PANTHER" id="PTHR33695:SF1">
    <property type="entry name" value="LIPOPROTEIN SIGNAL PEPTIDASE"/>
    <property type="match status" value="1"/>
</dbReference>
<dbReference type="Pfam" id="PF01252">
    <property type="entry name" value="Peptidase_A8"/>
    <property type="match status" value="1"/>
</dbReference>
<dbReference type="PRINTS" id="PR00781">
    <property type="entry name" value="LIPOSIGPTASE"/>
</dbReference>
<dbReference type="PROSITE" id="PS00855">
    <property type="entry name" value="SPASE_II"/>
    <property type="match status" value="1"/>
</dbReference>
<sequence>MASTTSRSARPARRNNKAASTTPLLWMAFALLVVVLDQFFKIVIVRTFTYGESRPVTGFFNLVLVYNKGAAFSFLADAGGWQRWFFTGLGIVVGAFIVWLLYRHTGQRLFCFAVSLILGGAVGNVIDRVVYGHVVDFLDFYVRNYHWPAFNVADCAITVGAVLLIVDELRRVRRH</sequence>
<accession>Q0K799</accession>
<name>LSPA_CUPNH</name>
<evidence type="ECO:0000255" key="1">
    <source>
        <dbReference type="HAMAP-Rule" id="MF_00161"/>
    </source>
</evidence>
<keyword id="KW-0064">Aspartyl protease</keyword>
<keyword id="KW-0997">Cell inner membrane</keyword>
<keyword id="KW-1003">Cell membrane</keyword>
<keyword id="KW-0378">Hydrolase</keyword>
<keyword id="KW-0472">Membrane</keyword>
<keyword id="KW-0645">Protease</keyword>
<keyword id="KW-1185">Reference proteome</keyword>
<keyword id="KW-0812">Transmembrane</keyword>
<keyword id="KW-1133">Transmembrane helix</keyword>
<gene>
    <name evidence="1" type="primary">lspA</name>
    <name type="ordered locus">H16_A3047</name>
</gene>
<protein>
    <recommendedName>
        <fullName evidence="1">Lipoprotein signal peptidase</fullName>
        <ecNumber evidence="1">3.4.23.36</ecNumber>
    </recommendedName>
    <alternativeName>
        <fullName evidence="1">Prolipoprotein signal peptidase</fullName>
    </alternativeName>
    <alternativeName>
        <fullName evidence="1">Signal peptidase II</fullName>
        <shortName evidence="1">SPase II</shortName>
    </alternativeName>
</protein>
<comment type="function">
    <text evidence="1">This protein specifically catalyzes the removal of signal peptides from prolipoproteins.</text>
</comment>
<comment type="catalytic activity">
    <reaction evidence="1">
        <text>Release of signal peptides from bacterial membrane prolipoproteins. Hydrolyzes -Xaa-Yaa-Zaa-|-(S,diacylglyceryl)Cys-, in which Xaa is hydrophobic (preferably Leu), and Yaa (Ala or Ser) and Zaa (Gly or Ala) have small, neutral side chains.</text>
        <dbReference type="EC" id="3.4.23.36"/>
    </reaction>
</comment>
<comment type="pathway">
    <text evidence="1">Protein modification; lipoprotein biosynthesis (signal peptide cleavage).</text>
</comment>
<comment type="subcellular location">
    <subcellularLocation>
        <location evidence="1">Cell inner membrane</location>
        <topology evidence="1">Multi-pass membrane protein</topology>
    </subcellularLocation>
</comment>
<comment type="similarity">
    <text evidence="1">Belongs to the peptidase A8 family.</text>
</comment>
<feature type="chain" id="PRO_1000038816" description="Lipoprotein signal peptidase">
    <location>
        <begin position="1"/>
        <end position="175"/>
    </location>
</feature>
<feature type="transmembrane region" description="Helical" evidence="1">
    <location>
        <begin position="25"/>
        <end position="45"/>
    </location>
</feature>
<feature type="transmembrane region" description="Helical" evidence="1">
    <location>
        <begin position="56"/>
        <end position="76"/>
    </location>
</feature>
<feature type="transmembrane region" description="Helical" evidence="1">
    <location>
        <begin position="81"/>
        <end position="101"/>
    </location>
</feature>
<feature type="transmembrane region" description="Helical" evidence="1">
    <location>
        <begin position="110"/>
        <end position="130"/>
    </location>
</feature>
<feature type="transmembrane region" description="Helical" evidence="1">
    <location>
        <begin position="146"/>
        <end position="166"/>
    </location>
</feature>
<feature type="active site" evidence="1">
    <location>
        <position position="136"/>
    </location>
</feature>
<feature type="active site" evidence="1">
    <location>
        <position position="154"/>
    </location>
</feature>